<sequence length="134" mass="15507">MAKKWLNKVKWDDNGLVPVIVQEVGSNDVLMFAFMNRDALQRTVELGEAVFWSRSRKRLWHKGEESGHVQKVHEIRLDCDEDVVLLKVTQIDNIACHTGRHSCFFQKFEGDVEVGDWQTVEPVLKDPAQIYTKP</sequence>
<reference key="1">
    <citation type="journal article" date="2006" name="Nat. Biotechnol.">
        <title>Genome sequence of the bioplastic-producing 'Knallgas' bacterium Ralstonia eutropha H16.</title>
        <authorList>
            <person name="Pohlmann A."/>
            <person name="Fricke W.F."/>
            <person name="Reinecke F."/>
            <person name="Kusian B."/>
            <person name="Liesegang H."/>
            <person name="Cramm R."/>
            <person name="Eitinger T."/>
            <person name="Ewering C."/>
            <person name="Poetter M."/>
            <person name="Schwartz E."/>
            <person name="Strittmatter A."/>
            <person name="Voss I."/>
            <person name="Gottschalk G."/>
            <person name="Steinbuechel A."/>
            <person name="Friedrich B."/>
            <person name="Bowien B."/>
        </authorList>
    </citation>
    <scope>NUCLEOTIDE SEQUENCE [LARGE SCALE GENOMIC DNA]</scope>
    <source>
        <strain>ATCC 17699 / DSM 428 / KCTC 22496 / NCIMB 10442 / H16 / Stanier 337</strain>
    </source>
</reference>
<gene>
    <name evidence="1" type="primary">hisI</name>
    <name type="ordered locus">H16_A3409</name>
</gene>
<protein>
    <recommendedName>
        <fullName evidence="1">Phosphoribosyl-AMP cyclohydrolase</fullName>
        <shortName evidence="1">PRA-CH</shortName>
        <ecNumber evidence="1">3.5.4.19</ecNumber>
    </recommendedName>
</protein>
<accession>Q0K694</accession>
<comment type="function">
    <text evidence="1">Catalyzes the hydrolysis of the adenine ring of phosphoribosyl-AMP.</text>
</comment>
<comment type="catalytic activity">
    <reaction evidence="1">
        <text>1-(5-phospho-beta-D-ribosyl)-5'-AMP + H2O = 1-(5-phospho-beta-D-ribosyl)-5-[(5-phospho-beta-D-ribosylamino)methylideneamino]imidazole-4-carboxamide</text>
        <dbReference type="Rhea" id="RHEA:20049"/>
        <dbReference type="ChEBI" id="CHEBI:15377"/>
        <dbReference type="ChEBI" id="CHEBI:58435"/>
        <dbReference type="ChEBI" id="CHEBI:59457"/>
        <dbReference type="EC" id="3.5.4.19"/>
    </reaction>
</comment>
<comment type="cofactor">
    <cofactor evidence="1">
        <name>Mg(2+)</name>
        <dbReference type="ChEBI" id="CHEBI:18420"/>
    </cofactor>
    <text evidence="1">Binds 1 Mg(2+) ion per subunit.</text>
</comment>
<comment type="cofactor">
    <cofactor evidence="1">
        <name>Zn(2+)</name>
        <dbReference type="ChEBI" id="CHEBI:29105"/>
    </cofactor>
    <text evidence="1">Binds 1 zinc ion per subunit.</text>
</comment>
<comment type="pathway">
    <text evidence="1">Amino-acid biosynthesis; L-histidine biosynthesis; L-histidine from 5-phospho-alpha-D-ribose 1-diphosphate: step 3/9.</text>
</comment>
<comment type="subunit">
    <text evidence="1">Homodimer.</text>
</comment>
<comment type="subcellular location">
    <subcellularLocation>
        <location evidence="1">Cytoplasm</location>
    </subcellularLocation>
</comment>
<comment type="similarity">
    <text evidence="1">Belongs to the PRA-CH family.</text>
</comment>
<name>HIS3_CUPNH</name>
<keyword id="KW-0028">Amino-acid biosynthesis</keyword>
<keyword id="KW-0963">Cytoplasm</keyword>
<keyword id="KW-0368">Histidine biosynthesis</keyword>
<keyword id="KW-0378">Hydrolase</keyword>
<keyword id="KW-0460">Magnesium</keyword>
<keyword id="KW-0479">Metal-binding</keyword>
<keyword id="KW-1185">Reference proteome</keyword>
<keyword id="KW-0862">Zinc</keyword>
<proteinExistence type="inferred from homology"/>
<feature type="chain" id="PRO_1000063429" description="Phosphoribosyl-AMP cyclohydrolase">
    <location>
        <begin position="1"/>
        <end position="134"/>
    </location>
</feature>
<feature type="binding site" evidence="1">
    <location>
        <position position="78"/>
    </location>
    <ligand>
        <name>Mg(2+)</name>
        <dbReference type="ChEBI" id="CHEBI:18420"/>
    </ligand>
</feature>
<feature type="binding site" evidence="1">
    <location>
        <position position="79"/>
    </location>
    <ligand>
        <name>Zn(2+)</name>
        <dbReference type="ChEBI" id="CHEBI:29105"/>
        <note>ligand shared between dimeric partners</note>
    </ligand>
</feature>
<feature type="binding site" evidence="1">
    <location>
        <position position="80"/>
    </location>
    <ligand>
        <name>Mg(2+)</name>
        <dbReference type="ChEBI" id="CHEBI:18420"/>
    </ligand>
</feature>
<feature type="binding site" evidence="1">
    <location>
        <position position="82"/>
    </location>
    <ligand>
        <name>Mg(2+)</name>
        <dbReference type="ChEBI" id="CHEBI:18420"/>
    </ligand>
</feature>
<feature type="binding site" evidence="1">
    <location>
        <position position="96"/>
    </location>
    <ligand>
        <name>Zn(2+)</name>
        <dbReference type="ChEBI" id="CHEBI:29105"/>
        <note>ligand shared between dimeric partners</note>
    </ligand>
</feature>
<feature type="binding site" evidence="1">
    <location>
        <position position="103"/>
    </location>
    <ligand>
        <name>Zn(2+)</name>
        <dbReference type="ChEBI" id="CHEBI:29105"/>
        <note>ligand shared between dimeric partners</note>
    </ligand>
</feature>
<evidence type="ECO:0000255" key="1">
    <source>
        <dbReference type="HAMAP-Rule" id="MF_01021"/>
    </source>
</evidence>
<dbReference type="EC" id="3.5.4.19" evidence="1"/>
<dbReference type="EMBL" id="AM260479">
    <property type="protein sequence ID" value="CAJ94477.1"/>
    <property type="molecule type" value="Genomic_DNA"/>
</dbReference>
<dbReference type="RefSeq" id="WP_011616141.1">
    <property type="nucleotide sequence ID" value="NC_008313.1"/>
</dbReference>
<dbReference type="SMR" id="Q0K694"/>
<dbReference type="STRING" id="381666.H16_A3409"/>
<dbReference type="KEGG" id="reh:H16_A3409"/>
<dbReference type="PATRIC" id="fig|381666.6.peg.3802"/>
<dbReference type="eggNOG" id="COG0139">
    <property type="taxonomic scope" value="Bacteria"/>
</dbReference>
<dbReference type="HOGENOM" id="CLU_048577_5_0_4"/>
<dbReference type="OrthoDB" id="9795769at2"/>
<dbReference type="UniPathway" id="UPA00031">
    <property type="reaction ID" value="UER00008"/>
</dbReference>
<dbReference type="Proteomes" id="UP000008210">
    <property type="component" value="Chromosome 1"/>
</dbReference>
<dbReference type="GO" id="GO:0005737">
    <property type="term" value="C:cytoplasm"/>
    <property type="evidence" value="ECO:0007669"/>
    <property type="project" value="UniProtKB-SubCell"/>
</dbReference>
<dbReference type="GO" id="GO:0000287">
    <property type="term" value="F:magnesium ion binding"/>
    <property type="evidence" value="ECO:0007669"/>
    <property type="project" value="UniProtKB-UniRule"/>
</dbReference>
<dbReference type="GO" id="GO:0004635">
    <property type="term" value="F:phosphoribosyl-AMP cyclohydrolase activity"/>
    <property type="evidence" value="ECO:0007669"/>
    <property type="project" value="UniProtKB-UniRule"/>
</dbReference>
<dbReference type="GO" id="GO:0008270">
    <property type="term" value="F:zinc ion binding"/>
    <property type="evidence" value="ECO:0007669"/>
    <property type="project" value="UniProtKB-UniRule"/>
</dbReference>
<dbReference type="GO" id="GO:0000105">
    <property type="term" value="P:L-histidine biosynthetic process"/>
    <property type="evidence" value="ECO:0007669"/>
    <property type="project" value="UniProtKB-UniRule"/>
</dbReference>
<dbReference type="FunFam" id="3.10.20.810:FF:000001">
    <property type="entry name" value="Histidine biosynthesis bifunctional protein HisIE"/>
    <property type="match status" value="1"/>
</dbReference>
<dbReference type="Gene3D" id="3.10.20.810">
    <property type="entry name" value="Phosphoribosyl-AMP cyclohydrolase"/>
    <property type="match status" value="1"/>
</dbReference>
<dbReference type="HAMAP" id="MF_01021">
    <property type="entry name" value="HisI"/>
    <property type="match status" value="1"/>
</dbReference>
<dbReference type="InterPro" id="IPR026660">
    <property type="entry name" value="PRA-CH"/>
</dbReference>
<dbReference type="InterPro" id="IPR002496">
    <property type="entry name" value="PRib_AMP_CycHydrolase_dom"/>
</dbReference>
<dbReference type="InterPro" id="IPR038019">
    <property type="entry name" value="PRib_AMP_CycHydrolase_sf"/>
</dbReference>
<dbReference type="NCBIfam" id="NF000768">
    <property type="entry name" value="PRK00051.1"/>
    <property type="match status" value="1"/>
</dbReference>
<dbReference type="PANTHER" id="PTHR42945">
    <property type="entry name" value="HISTIDINE BIOSYNTHESIS BIFUNCTIONAL PROTEIN"/>
    <property type="match status" value="1"/>
</dbReference>
<dbReference type="PANTHER" id="PTHR42945:SF1">
    <property type="entry name" value="HISTIDINE BIOSYNTHESIS BIFUNCTIONAL PROTEIN HIS7"/>
    <property type="match status" value="1"/>
</dbReference>
<dbReference type="Pfam" id="PF01502">
    <property type="entry name" value="PRA-CH"/>
    <property type="match status" value="1"/>
</dbReference>
<dbReference type="SUPFAM" id="SSF141734">
    <property type="entry name" value="HisI-like"/>
    <property type="match status" value="1"/>
</dbReference>
<organism>
    <name type="scientific">Cupriavidus necator (strain ATCC 17699 / DSM 428 / KCTC 22496 / NCIMB 10442 / H16 / Stanier 337)</name>
    <name type="common">Ralstonia eutropha</name>
    <dbReference type="NCBI Taxonomy" id="381666"/>
    <lineage>
        <taxon>Bacteria</taxon>
        <taxon>Pseudomonadati</taxon>
        <taxon>Pseudomonadota</taxon>
        <taxon>Betaproteobacteria</taxon>
        <taxon>Burkholderiales</taxon>
        <taxon>Burkholderiaceae</taxon>
        <taxon>Cupriavidus</taxon>
    </lineage>
</organism>